<comment type="function">
    <text evidence="4 6">Regulator of the Hippo/SWH (Sav/Wts/Hpo) signaling pathway, a signaling pathway that plays a pivotal role in organ size control and tumor suppression by restricting proliferation and promoting apoptosis. The core of this pathway is composed of a kinase cascade wherein Hippo (Hpo), in complex with its regulatory protein Salvador (Sav), phosphorylates and activates Warts (Wts) in complex with its regulatory protein Mats, which in turn phosphorylates and inactivates the Yorkie (Yki) oncoprotein. Mer acts synergistically along with Ex and Kibra to regulate the Hippo signaling pathway.</text>
</comment>
<comment type="subunit">
    <text evidence="4 5 6">Interacts with Moe and arm at the adherens junction (PubMed:8666669). Forms a complex with Kibra and Ex (PubMed:20159598). Interacts (via FERM domain) with Sav (via FBM motif) (PubMed:20159598). Interacts with Schip1 (PubMed:26954546).</text>
</comment>
<comment type="interaction">
    <interactant intactId="EBI-180142">
        <id>Q24564</id>
    </interactant>
    <interactant intactId="EBI-180142">
        <id>Q24564</id>
        <label>Mer</label>
    </interactant>
    <organismsDiffer>false</organismsDiffer>
    <experiments>3</experiments>
</comment>
<comment type="interaction">
    <interactant intactId="EBI-180142">
        <id>Q24564</id>
    </interactant>
    <interactant intactId="EBI-82717">
        <id>Q9VA38</id>
        <label>wts</label>
    </interactant>
    <organismsDiffer>false</organismsDiffer>
    <experiments>8</experiments>
</comment>
<comment type="subcellular location">
    <subcellularLocation>
        <location>Cell junction</location>
        <location>Adherens junction</location>
    </subcellularLocation>
    <subcellularLocation>
        <location>Cell membrane</location>
        <topology>Peripheral membrane protein</topology>
        <orientation>Cytoplasmic side</orientation>
    </subcellularLocation>
    <subcellularLocation>
        <location>Cytoplasm</location>
        <location>Cytoskeleton</location>
    </subcellularLocation>
    <subcellularLocation>
        <location>Apical cell membrane</location>
    </subcellularLocation>
    <subcellularLocation>
        <location evidence="6">Cell projection</location>
        <location evidence="6">Rhabdomere</location>
    </subcellularLocation>
    <text>Membrane-associated, adherens junctions and endocytic compartments. Cytoplasmic, punctate.</text>
</comment>
<comment type="tissue specificity">
    <text evidence="6">Expressed predominantly in the germline. Expressed in the developing oocyte from stage 6 to the end of oogenesis and in the apical ends of follical cells from stage 10. Ubiquitous expression throughout embryogenesis with enhanced expression in mesoderm of early embryos and midgut of late embryos. In embryonic CNS, expression is seen in neuropil and developing brain and is enhanced in neuronal cell bodies. In embryonic PNS, expression is seen within the cell body. In third instar larvae, expression is uniform in the eye imaginal disk and is enhanced at the morphogenetic furrow. In pupal eyes, expression is seen in the cytoplasm of secondary and tertiary pigment cells, bristle precursor cells and rhabdomeres.</text>
</comment>
<comment type="developmental stage">
    <text evidence="6">Expressed maternally and zygotically in embryos.</text>
</comment>
<evidence type="ECO:0000255" key="1">
    <source>
        <dbReference type="PROSITE-ProRule" id="PRU00084"/>
    </source>
</evidence>
<evidence type="ECO:0000269" key="2">
    <source>
    </source>
</evidence>
<evidence type="ECO:0000269" key="3">
    <source>
    </source>
</evidence>
<evidence type="ECO:0000269" key="4">
    <source>
    </source>
</evidence>
<evidence type="ECO:0000269" key="5">
    <source>
    </source>
</evidence>
<evidence type="ECO:0000269" key="6">
    <source>
    </source>
</evidence>
<evidence type="ECO:0000305" key="7"/>
<evidence type="ECO:0000312" key="8">
    <source>
        <dbReference type="EMBL" id="AAM11326.1"/>
    </source>
</evidence>
<evidence type="ECO:0007829" key="9">
    <source>
        <dbReference type="PDB" id="7EDR"/>
    </source>
</evidence>
<keyword id="KW-0002">3D-structure</keyword>
<keyword id="KW-0965">Cell junction</keyword>
<keyword id="KW-1003">Cell membrane</keyword>
<keyword id="KW-0966">Cell projection</keyword>
<keyword id="KW-0963">Cytoplasm</keyword>
<keyword id="KW-0206">Cytoskeleton</keyword>
<keyword id="KW-0254">Endocytosis</keyword>
<keyword id="KW-0472">Membrane</keyword>
<keyword id="KW-1185">Reference proteome</keyword>
<keyword id="KW-0804">Transcription</keyword>
<keyword id="KW-0805">Transcription regulation</keyword>
<reference evidence="7" key="1">
    <citation type="journal article" date="1996" name="J. Cell Biol.">
        <title>Distinct cellular and subcellular patterns of expression imply distinct functions for the Drosophila homologues of moesin and the neurofibromatosis 2 tumor suppressor, merlin.</title>
        <authorList>
            <person name="McCartney B.M."/>
            <person name="Fehon R.G."/>
        </authorList>
    </citation>
    <scope>NUCLEOTIDE SEQUENCE [MRNA]</scope>
    <scope>FUNCTION</scope>
    <scope>SUBUNIT</scope>
    <scope>SUBCELLULAR LOCATION</scope>
    <scope>TISSUE SPECIFICITY</scope>
    <scope>DEVELOPMENTAL STAGE</scope>
    <source>
        <strain evidence="6">Oregon-R</strain>
        <tissue evidence="6">Embryo</tissue>
    </source>
</reference>
<reference evidence="7" key="2">
    <citation type="journal article" date="2000" name="Science">
        <title>The genome sequence of Drosophila melanogaster.</title>
        <authorList>
            <person name="Adams M.D."/>
            <person name="Celniker S.E."/>
            <person name="Holt R.A."/>
            <person name="Evans C.A."/>
            <person name="Gocayne J.D."/>
            <person name="Amanatides P.G."/>
            <person name="Scherer S.E."/>
            <person name="Li P.W."/>
            <person name="Hoskins R.A."/>
            <person name="Galle R.F."/>
            <person name="George R.A."/>
            <person name="Lewis S.E."/>
            <person name="Richards S."/>
            <person name="Ashburner M."/>
            <person name="Henderson S.N."/>
            <person name="Sutton G.G."/>
            <person name="Wortman J.R."/>
            <person name="Yandell M.D."/>
            <person name="Zhang Q."/>
            <person name="Chen L.X."/>
            <person name="Brandon R.C."/>
            <person name="Rogers Y.-H.C."/>
            <person name="Blazej R.G."/>
            <person name="Champe M."/>
            <person name="Pfeiffer B.D."/>
            <person name="Wan K.H."/>
            <person name="Doyle C."/>
            <person name="Baxter E.G."/>
            <person name="Helt G."/>
            <person name="Nelson C.R."/>
            <person name="Miklos G.L.G."/>
            <person name="Abril J.F."/>
            <person name="Agbayani A."/>
            <person name="An H.-J."/>
            <person name="Andrews-Pfannkoch C."/>
            <person name="Baldwin D."/>
            <person name="Ballew R.M."/>
            <person name="Basu A."/>
            <person name="Baxendale J."/>
            <person name="Bayraktaroglu L."/>
            <person name="Beasley E.M."/>
            <person name="Beeson K.Y."/>
            <person name="Benos P.V."/>
            <person name="Berman B.P."/>
            <person name="Bhandari D."/>
            <person name="Bolshakov S."/>
            <person name="Borkova D."/>
            <person name="Botchan M.R."/>
            <person name="Bouck J."/>
            <person name="Brokstein P."/>
            <person name="Brottier P."/>
            <person name="Burtis K.C."/>
            <person name="Busam D.A."/>
            <person name="Butler H."/>
            <person name="Cadieu E."/>
            <person name="Center A."/>
            <person name="Chandra I."/>
            <person name="Cherry J.M."/>
            <person name="Cawley S."/>
            <person name="Dahlke C."/>
            <person name="Davenport L.B."/>
            <person name="Davies P."/>
            <person name="de Pablos B."/>
            <person name="Delcher A."/>
            <person name="Deng Z."/>
            <person name="Mays A.D."/>
            <person name="Dew I."/>
            <person name="Dietz S.M."/>
            <person name="Dodson K."/>
            <person name="Doup L.E."/>
            <person name="Downes M."/>
            <person name="Dugan-Rocha S."/>
            <person name="Dunkov B.C."/>
            <person name="Dunn P."/>
            <person name="Durbin K.J."/>
            <person name="Evangelista C.C."/>
            <person name="Ferraz C."/>
            <person name="Ferriera S."/>
            <person name="Fleischmann W."/>
            <person name="Fosler C."/>
            <person name="Gabrielian A.E."/>
            <person name="Garg N.S."/>
            <person name="Gelbart W.M."/>
            <person name="Glasser K."/>
            <person name="Glodek A."/>
            <person name="Gong F."/>
            <person name="Gorrell J.H."/>
            <person name="Gu Z."/>
            <person name="Guan P."/>
            <person name="Harris M."/>
            <person name="Harris N.L."/>
            <person name="Harvey D.A."/>
            <person name="Heiman T.J."/>
            <person name="Hernandez J.R."/>
            <person name="Houck J."/>
            <person name="Hostin D."/>
            <person name="Houston K.A."/>
            <person name="Howland T.J."/>
            <person name="Wei M.-H."/>
            <person name="Ibegwam C."/>
            <person name="Jalali M."/>
            <person name="Kalush F."/>
            <person name="Karpen G.H."/>
            <person name="Ke Z."/>
            <person name="Kennison J.A."/>
            <person name="Ketchum K.A."/>
            <person name="Kimmel B.E."/>
            <person name="Kodira C.D."/>
            <person name="Kraft C.L."/>
            <person name="Kravitz S."/>
            <person name="Kulp D."/>
            <person name="Lai Z."/>
            <person name="Lasko P."/>
            <person name="Lei Y."/>
            <person name="Levitsky A.A."/>
            <person name="Li J.H."/>
            <person name="Li Z."/>
            <person name="Liang Y."/>
            <person name="Lin X."/>
            <person name="Liu X."/>
            <person name="Mattei B."/>
            <person name="McIntosh T.C."/>
            <person name="McLeod M.P."/>
            <person name="McPherson D."/>
            <person name="Merkulov G."/>
            <person name="Milshina N.V."/>
            <person name="Mobarry C."/>
            <person name="Morris J."/>
            <person name="Moshrefi A."/>
            <person name="Mount S.M."/>
            <person name="Moy M."/>
            <person name="Murphy B."/>
            <person name="Murphy L."/>
            <person name="Muzny D.M."/>
            <person name="Nelson D.L."/>
            <person name="Nelson D.R."/>
            <person name="Nelson K.A."/>
            <person name="Nixon K."/>
            <person name="Nusskern D.R."/>
            <person name="Pacleb J.M."/>
            <person name="Palazzolo M."/>
            <person name="Pittman G.S."/>
            <person name="Pan S."/>
            <person name="Pollard J."/>
            <person name="Puri V."/>
            <person name="Reese M.G."/>
            <person name="Reinert K."/>
            <person name="Remington K."/>
            <person name="Saunders R.D.C."/>
            <person name="Scheeler F."/>
            <person name="Shen H."/>
            <person name="Shue B.C."/>
            <person name="Siden-Kiamos I."/>
            <person name="Simpson M."/>
            <person name="Skupski M.P."/>
            <person name="Smith T.J."/>
            <person name="Spier E."/>
            <person name="Spradling A.C."/>
            <person name="Stapleton M."/>
            <person name="Strong R."/>
            <person name="Sun E."/>
            <person name="Svirskas R."/>
            <person name="Tector C."/>
            <person name="Turner R."/>
            <person name="Venter E."/>
            <person name="Wang A.H."/>
            <person name="Wang X."/>
            <person name="Wang Z.-Y."/>
            <person name="Wassarman D.A."/>
            <person name="Weinstock G.M."/>
            <person name="Weissenbach J."/>
            <person name="Williams S.M."/>
            <person name="Woodage T."/>
            <person name="Worley K.C."/>
            <person name="Wu D."/>
            <person name="Yang S."/>
            <person name="Yao Q.A."/>
            <person name="Ye J."/>
            <person name="Yeh R.-F."/>
            <person name="Zaveri J.S."/>
            <person name="Zhan M."/>
            <person name="Zhang G."/>
            <person name="Zhao Q."/>
            <person name="Zheng L."/>
            <person name="Zheng X.H."/>
            <person name="Zhong F.N."/>
            <person name="Zhong W."/>
            <person name="Zhou X."/>
            <person name="Zhu S.C."/>
            <person name="Zhu X."/>
            <person name="Smith H.O."/>
            <person name="Gibbs R.A."/>
            <person name="Myers E.W."/>
            <person name="Rubin G.M."/>
            <person name="Venter J.C."/>
        </authorList>
    </citation>
    <scope>NUCLEOTIDE SEQUENCE [LARGE SCALE GENOMIC DNA]</scope>
    <source>
        <strain evidence="2">Berkeley</strain>
    </source>
</reference>
<reference key="3">
    <citation type="journal article" date="2002" name="Genome Biol.">
        <title>Annotation of the Drosophila melanogaster euchromatic genome: a systematic review.</title>
        <authorList>
            <person name="Misra S."/>
            <person name="Crosby M.A."/>
            <person name="Mungall C.J."/>
            <person name="Matthews B.B."/>
            <person name="Campbell K.S."/>
            <person name="Hradecky P."/>
            <person name="Huang Y."/>
            <person name="Kaminker J.S."/>
            <person name="Millburn G.H."/>
            <person name="Prochnik S.E."/>
            <person name="Smith C.D."/>
            <person name="Tupy J.L."/>
            <person name="Whitfield E.J."/>
            <person name="Bayraktaroglu L."/>
            <person name="Berman B.P."/>
            <person name="Bettencourt B.R."/>
            <person name="Celniker S.E."/>
            <person name="de Grey A.D.N.J."/>
            <person name="Drysdale R.A."/>
            <person name="Harris N.L."/>
            <person name="Richter J."/>
            <person name="Russo S."/>
            <person name="Schroeder A.J."/>
            <person name="Shu S.Q."/>
            <person name="Stapleton M."/>
            <person name="Yamada C."/>
            <person name="Ashburner M."/>
            <person name="Gelbart W.M."/>
            <person name="Rubin G.M."/>
            <person name="Lewis S.E."/>
        </authorList>
    </citation>
    <scope>GENOME REANNOTATION</scope>
    <source>
        <strain>Berkeley</strain>
    </source>
</reference>
<reference evidence="7" key="4">
    <citation type="journal article" date="2002" name="Genome Biol.">
        <title>A Drosophila full-length cDNA resource.</title>
        <authorList>
            <person name="Stapleton M."/>
            <person name="Carlson J.W."/>
            <person name="Brokstein P."/>
            <person name="Yu C."/>
            <person name="Champe M."/>
            <person name="George R.A."/>
            <person name="Guarin H."/>
            <person name="Kronmiller B."/>
            <person name="Pacleb J.M."/>
            <person name="Park S."/>
            <person name="Wan K.H."/>
            <person name="Rubin G.M."/>
            <person name="Celniker S.E."/>
        </authorList>
    </citation>
    <scope>NUCLEOTIDE SEQUENCE [LARGE SCALE MRNA]</scope>
    <source>
        <strain evidence="3">Berkeley</strain>
        <tissue evidence="3">Head</tissue>
    </source>
</reference>
<reference evidence="7" key="5">
    <citation type="submission" date="1995-03" db="EMBL/GenBank/DDBJ databases">
        <authorList>
            <person name="Winge P."/>
            <person name="Fleming J.T."/>
            <person name="Gobel V."/>
        </authorList>
    </citation>
    <scope>NUCLEOTIDE SEQUENCE [MRNA] OF 218-307</scope>
    <source>
        <tissue>Embryo</tissue>
    </source>
</reference>
<reference key="6">
    <citation type="journal article" date="2010" name="Dev. Cell">
        <title>Kibra functions as a tumor suppressor protein that regulates Hippo signaling in conjunction with Merlin and Expanded.</title>
        <authorList>
            <person name="Yu J."/>
            <person name="Zheng Y."/>
            <person name="Dong J."/>
            <person name="Klusza S."/>
            <person name="Deng W.-M."/>
            <person name="Pan D."/>
        </authorList>
    </citation>
    <scope>FUNCTION</scope>
    <scope>SUBCELLULAR LOCATION</scope>
    <scope>INTERACTION WITH KIBRA; EX AND SAV</scope>
</reference>
<reference key="7">
    <citation type="journal article" date="2016" name="Dev. Cell">
        <title>Drosophila Schip1 links Expanded and Tao-1 to regulate hippo signaling.</title>
        <authorList>
            <person name="Chung H.L."/>
            <person name="Augustine G.J."/>
            <person name="Choi K.W."/>
        </authorList>
    </citation>
    <scope>INTERACTION WITH SCHIP1</scope>
</reference>
<gene>
    <name type="primary">Mer</name>
    <name type="synonym">EMR2</name>
    <name type="ORF">CG14228</name>
</gene>
<name>MERH_DROME</name>
<proteinExistence type="evidence at protein level"/>
<organism evidence="8">
    <name type="scientific">Drosophila melanogaster</name>
    <name type="common">Fruit fly</name>
    <dbReference type="NCBI Taxonomy" id="7227"/>
    <lineage>
        <taxon>Eukaryota</taxon>
        <taxon>Metazoa</taxon>
        <taxon>Ecdysozoa</taxon>
        <taxon>Arthropoda</taxon>
        <taxon>Hexapoda</taxon>
        <taxon>Insecta</taxon>
        <taxon>Pterygota</taxon>
        <taxon>Neoptera</taxon>
        <taxon>Endopterygota</taxon>
        <taxon>Diptera</taxon>
        <taxon>Brachycera</taxon>
        <taxon>Muscomorpha</taxon>
        <taxon>Ephydroidea</taxon>
        <taxon>Drosophilidae</taxon>
        <taxon>Drosophila</taxon>
        <taxon>Sophophora</taxon>
    </lineage>
</organism>
<sequence length="635" mass="74492">MSPFGSKKNRSLSVRVSTFDSELEFKLEPRASGQDLFDLVCRTIGLRESWYFGLQYVDTRSNVSWLKMEKRVRDQRVELHASNNVYVFSFYAKFFPENVSEELIQEITQHLFFLQVKQSILSMDIYCRPEASVLLASYAVHVQYGPYDYETYKDGMLAGGELLPKGVTDQYQMTPEMWEERIKTWYMDHEPMTRDEVEMEYLKIAQDLDMYGVNYFPITNKNKTKLWLGVTSVGLNIYDERDKLTPKTTFQWNEIRHVSFDDKKFTIRLVDAKVSNFIFYSQDLHINKMILDLCKGNHDLYMRRRKPDTMEIQQMKAQAKEEKQRRQIERKKFIREKKLREKAEHERYELEKSMEHLQNEMRMANDALRRSEETKELYFEKSRVNEEQMQLTECKANHFKTEMDRLRERQMKIEREKHDLEKKIRDADFYVHQLTVENDKREAETEKLRKELICAKMAEREATARLLEFLNSGRKSSTDSLLTASSVSHAANTASSMAAISTPSLITSSSTNDLETAGGAELTTHSSHYLVQGDNSSGISDDFEPKEFILTDNEMEQITNEMERNHLDYLRNSKQVQSQLQTLRSEIAPHKIEENQSNLDILSEAQIKAGENKYSTLKKLKSGSTKARVAFFEEL</sequence>
<protein>
    <recommendedName>
        <fullName>Moesin/ezrin/radixin homolog 2</fullName>
    </recommendedName>
    <alternativeName>
        <fullName>Ezrin-moesin-radixin 2</fullName>
    </alternativeName>
    <alternativeName>
        <fullName>Merlin</fullName>
        <shortName>dMerlin</shortName>
    </alternativeName>
</protein>
<accession>Q24564</accession>
<accession>Q24054</accession>
<accession>Q8SWY3</accession>
<feature type="chain" id="PRO_0000219426" description="Moesin/ezrin/radixin homolog 2">
    <location>
        <begin position="1"/>
        <end position="635"/>
    </location>
</feature>
<feature type="domain" description="FERM" evidence="1 7">
    <location>
        <begin position="12"/>
        <end position="305"/>
    </location>
</feature>
<feature type="sequence conflict" description="In Ref. 4; AAM11326." evidence="7" ref="4">
    <original>G</original>
    <variation>R</variation>
    <location>
        <position position="166"/>
    </location>
</feature>
<feature type="strand" evidence="9">
    <location>
        <begin position="12"/>
        <end position="17"/>
    </location>
</feature>
<feature type="strand" evidence="9">
    <location>
        <begin position="22"/>
        <end position="27"/>
    </location>
</feature>
<feature type="helix" evidence="9">
    <location>
        <begin position="33"/>
        <end position="44"/>
    </location>
</feature>
<feature type="helix" evidence="9">
    <location>
        <begin position="49"/>
        <end position="51"/>
    </location>
</feature>
<feature type="strand" evidence="9">
    <location>
        <begin position="52"/>
        <end position="58"/>
    </location>
</feature>
<feature type="strand" evidence="9">
    <location>
        <begin position="63"/>
        <end position="65"/>
    </location>
</feature>
<feature type="strand" evidence="9">
    <location>
        <begin position="68"/>
        <end position="71"/>
    </location>
</feature>
<feature type="helix" evidence="9">
    <location>
        <begin position="72"/>
        <end position="74"/>
    </location>
</feature>
<feature type="helix" evidence="9">
    <location>
        <begin position="80"/>
        <end position="82"/>
    </location>
</feature>
<feature type="strand" evidence="9">
    <location>
        <begin position="85"/>
        <end position="92"/>
    </location>
</feature>
<feature type="helix" evidence="9">
    <location>
        <begin position="99"/>
        <end position="102"/>
    </location>
</feature>
<feature type="helix" evidence="9">
    <location>
        <begin position="106"/>
        <end position="121"/>
    </location>
</feature>
<feature type="helix" evidence="9">
    <location>
        <begin position="129"/>
        <end position="144"/>
    </location>
</feature>
<feature type="turn" evidence="9">
    <location>
        <begin position="149"/>
        <end position="151"/>
    </location>
</feature>
<feature type="helix" evidence="9">
    <location>
        <begin position="155"/>
        <end position="158"/>
    </location>
</feature>
<feature type="helix" evidence="9">
    <location>
        <begin position="165"/>
        <end position="169"/>
    </location>
</feature>
<feature type="helix" evidence="9">
    <location>
        <begin position="175"/>
        <end position="188"/>
    </location>
</feature>
<feature type="helix" evidence="9">
    <location>
        <begin position="194"/>
        <end position="206"/>
    </location>
</feature>
<feature type="turn" evidence="9">
    <location>
        <begin position="209"/>
        <end position="212"/>
    </location>
</feature>
<feature type="strand" evidence="9">
    <location>
        <begin position="214"/>
        <end position="219"/>
    </location>
</feature>
<feature type="strand" evidence="9">
    <location>
        <begin position="225"/>
        <end position="230"/>
    </location>
</feature>
<feature type="strand" evidence="9">
    <location>
        <begin position="232"/>
        <end position="239"/>
    </location>
</feature>
<feature type="strand" evidence="9">
    <location>
        <begin position="243"/>
        <end position="245"/>
    </location>
</feature>
<feature type="strand" evidence="9">
    <location>
        <begin position="247"/>
        <end position="251"/>
    </location>
</feature>
<feature type="helix" evidence="9">
    <location>
        <begin position="252"/>
        <end position="254"/>
    </location>
</feature>
<feature type="strand" evidence="9">
    <location>
        <begin position="255"/>
        <end position="261"/>
    </location>
</feature>
<feature type="strand" evidence="9">
    <location>
        <begin position="264"/>
        <end position="270"/>
    </location>
</feature>
<feature type="strand" evidence="9">
    <location>
        <begin position="277"/>
        <end position="280"/>
    </location>
</feature>
<feature type="helix" evidence="9">
    <location>
        <begin position="284"/>
        <end position="304"/>
    </location>
</feature>
<feature type="helix" evidence="9">
    <location>
        <begin position="307"/>
        <end position="310"/>
    </location>
</feature>
<feature type="strand" evidence="9">
    <location>
        <begin position="528"/>
        <end position="532"/>
    </location>
</feature>
<feature type="strand" evidence="9">
    <location>
        <begin position="535"/>
        <end position="539"/>
    </location>
</feature>
<feature type="strand" evidence="9">
    <location>
        <begin position="546"/>
        <end position="551"/>
    </location>
</feature>
<feature type="helix" evidence="9">
    <location>
        <begin position="552"/>
        <end position="572"/>
    </location>
</feature>
<feature type="helix" evidence="9">
    <location>
        <begin position="574"/>
        <end position="587"/>
    </location>
</feature>
<feature type="helix" evidence="9">
    <location>
        <begin position="588"/>
        <end position="590"/>
    </location>
</feature>
<feature type="helix" evidence="9">
    <location>
        <begin position="593"/>
        <end position="595"/>
    </location>
</feature>
<feature type="helix" evidence="9">
    <location>
        <begin position="598"/>
        <end position="608"/>
    </location>
</feature>
<feature type="helix" evidence="9">
    <location>
        <begin position="613"/>
        <end position="621"/>
    </location>
</feature>
<feature type="helix" evidence="9">
    <location>
        <begin position="625"/>
        <end position="633"/>
    </location>
</feature>
<dbReference type="EMBL" id="U49724">
    <property type="protein sequence ID" value="AAB08449.1"/>
    <property type="molecule type" value="mRNA"/>
</dbReference>
<dbReference type="EMBL" id="AE014298">
    <property type="protein sequence ID" value="AAF49005.1"/>
    <property type="molecule type" value="Genomic_DNA"/>
</dbReference>
<dbReference type="EMBL" id="AY094998">
    <property type="protein sequence ID" value="AAM11326.1"/>
    <property type="molecule type" value="mRNA"/>
</dbReference>
<dbReference type="EMBL" id="U23799">
    <property type="protein sequence ID" value="AAA65060.1"/>
    <property type="molecule type" value="mRNA"/>
</dbReference>
<dbReference type="RefSeq" id="NP_001285458.1">
    <property type="nucleotide sequence ID" value="NM_001298529.1"/>
</dbReference>
<dbReference type="RefSeq" id="NP_523413.1">
    <property type="nucleotide sequence ID" value="NM_078689.4"/>
</dbReference>
<dbReference type="PDB" id="7EDR">
    <property type="method" value="X-ray"/>
    <property type="resolution" value="2.53 A"/>
    <property type="chains" value="A/B=8-314, C/D=510-635"/>
</dbReference>
<dbReference type="PDBsum" id="7EDR"/>
<dbReference type="SMR" id="Q24564"/>
<dbReference type="BioGRID" id="59275">
    <property type="interactions" value="173"/>
</dbReference>
<dbReference type="ComplexPortal" id="CPX-2706">
    <property type="entry name" value="KIBRA-EX-MER complex"/>
</dbReference>
<dbReference type="DIP" id="DIP-17087N"/>
<dbReference type="FunCoup" id="Q24564">
    <property type="interactions" value="357"/>
</dbReference>
<dbReference type="IntAct" id="Q24564">
    <property type="interactions" value="12"/>
</dbReference>
<dbReference type="STRING" id="7227.FBpp0311877"/>
<dbReference type="TCDB" id="8.A.25.1.3">
    <property type="family name" value="the ezrin/radixin/moesin (ezrin) family"/>
</dbReference>
<dbReference type="iPTMnet" id="Q24564"/>
<dbReference type="PaxDb" id="7227-FBpp0074523"/>
<dbReference type="EnsemblMetazoa" id="FBtr0074754">
    <property type="protein sequence ID" value="FBpp0074523"/>
    <property type="gene ID" value="FBgn0086384"/>
</dbReference>
<dbReference type="EnsemblMetazoa" id="FBtr0345992">
    <property type="protein sequence ID" value="FBpp0311877"/>
    <property type="gene ID" value="FBgn0086384"/>
</dbReference>
<dbReference type="GeneID" id="32979"/>
<dbReference type="KEGG" id="dme:Dmel_CG14228"/>
<dbReference type="AGR" id="FB:FBgn0086384"/>
<dbReference type="CTD" id="32979"/>
<dbReference type="FlyBase" id="FBgn0086384">
    <property type="gene designation" value="Mer"/>
</dbReference>
<dbReference type="VEuPathDB" id="VectorBase:FBgn0086384"/>
<dbReference type="eggNOG" id="KOG3529">
    <property type="taxonomic scope" value="Eukaryota"/>
</dbReference>
<dbReference type="HOGENOM" id="CLU_003623_6_1_1"/>
<dbReference type="InParanoid" id="Q24564"/>
<dbReference type="OMA" id="PGMLANE"/>
<dbReference type="OrthoDB" id="6018897at2759"/>
<dbReference type="PhylomeDB" id="Q24564"/>
<dbReference type="Reactome" id="R-DME-2029482">
    <property type="pathway name" value="Regulation of actin dynamics for phagocytic cup formation"/>
</dbReference>
<dbReference type="Reactome" id="R-DME-5627123">
    <property type="pathway name" value="RHO GTPases activate PAKs"/>
</dbReference>
<dbReference type="SignaLink" id="Q24564"/>
<dbReference type="BioGRID-ORCS" id="32979">
    <property type="hits" value="0 hits in 1 CRISPR screen"/>
</dbReference>
<dbReference type="GenomeRNAi" id="32979"/>
<dbReference type="PRO" id="PR:Q24564"/>
<dbReference type="Proteomes" id="UP000000803">
    <property type="component" value="Chromosome X"/>
</dbReference>
<dbReference type="Bgee" id="FBgn0086384">
    <property type="expression patterns" value="Expressed in egg cell and 69 other cell types or tissues"/>
</dbReference>
<dbReference type="ExpressionAtlas" id="Q24564">
    <property type="expression patterns" value="baseline and differential"/>
</dbReference>
<dbReference type="GO" id="GO:0005912">
    <property type="term" value="C:adherens junction"/>
    <property type="evidence" value="ECO:0000314"/>
    <property type="project" value="UniProtKB"/>
</dbReference>
<dbReference type="GO" id="GO:0045177">
    <property type="term" value="C:apical part of cell"/>
    <property type="evidence" value="ECO:0000314"/>
    <property type="project" value="FlyBase"/>
</dbReference>
<dbReference type="GO" id="GO:0016324">
    <property type="term" value="C:apical plasma membrane"/>
    <property type="evidence" value="ECO:0000314"/>
    <property type="project" value="FlyBase"/>
</dbReference>
<dbReference type="GO" id="GO:0106037">
    <property type="term" value="C:apicomedial cortex"/>
    <property type="evidence" value="ECO:0000314"/>
    <property type="project" value="FlyBase"/>
</dbReference>
<dbReference type="GO" id="GO:0005938">
    <property type="term" value="C:cell cortex"/>
    <property type="evidence" value="ECO:0000314"/>
    <property type="project" value="FlyBase"/>
</dbReference>
<dbReference type="GO" id="GO:0005737">
    <property type="term" value="C:cytoplasm"/>
    <property type="evidence" value="ECO:0000314"/>
    <property type="project" value="FlyBase"/>
</dbReference>
<dbReference type="GO" id="GO:0098592">
    <property type="term" value="C:cytoplasmic side of apical plasma membrane"/>
    <property type="evidence" value="ECO:0000314"/>
    <property type="project" value="FlyBase"/>
</dbReference>
<dbReference type="GO" id="GO:0005856">
    <property type="term" value="C:cytoskeleton"/>
    <property type="evidence" value="ECO:0007669"/>
    <property type="project" value="UniProtKB-SubCell"/>
</dbReference>
<dbReference type="GO" id="GO:0030175">
    <property type="term" value="C:filopodium"/>
    <property type="evidence" value="ECO:0000318"/>
    <property type="project" value="GO_Central"/>
</dbReference>
<dbReference type="GO" id="GO:0036375">
    <property type="term" value="C:Kibra-Ex-Mer complex"/>
    <property type="evidence" value="ECO:0000314"/>
    <property type="project" value="UniProtKB"/>
</dbReference>
<dbReference type="GO" id="GO:0016020">
    <property type="term" value="C:membrane"/>
    <property type="evidence" value="ECO:0000314"/>
    <property type="project" value="FlyBase"/>
</dbReference>
<dbReference type="GO" id="GO:0016006">
    <property type="term" value="C:Nebenkern"/>
    <property type="evidence" value="ECO:0000314"/>
    <property type="project" value="FlyBase"/>
</dbReference>
<dbReference type="GO" id="GO:0005886">
    <property type="term" value="C:plasma membrane"/>
    <property type="evidence" value="ECO:0000314"/>
    <property type="project" value="FlyBase"/>
</dbReference>
<dbReference type="GO" id="GO:0016028">
    <property type="term" value="C:rhabdomere"/>
    <property type="evidence" value="ECO:0007669"/>
    <property type="project" value="UniProtKB-SubCell"/>
</dbReference>
<dbReference type="GO" id="GO:0120219">
    <property type="term" value="C:subapical part of cell"/>
    <property type="evidence" value="ECO:0000314"/>
    <property type="project" value="FlyBase"/>
</dbReference>
<dbReference type="GO" id="GO:0003779">
    <property type="term" value="F:actin binding"/>
    <property type="evidence" value="ECO:0000318"/>
    <property type="project" value="GO_Central"/>
</dbReference>
<dbReference type="GO" id="GO:0042802">
    <property type="term" value="F:identical protein binding"/>
    <property type="evidence" value="ECO:0000353"/>
    <property type="project" value="IntAct"/>
</dbReference>
<dbReference type="GO" id="GO:0005178">
    <property type="term" value="F:integrin binding"/>
    <property type="evidence" value="ECO:0000318"/>
    <property type="project" value="GO_Central"/>
</dbReference>
<dbReference type="GO" id="GO:0043495">
    <property type="term" value="F:protein-membrane adaptor activity"/>
    <property type="evidence" value="ECO:0000314"/>
    <property type="project" value="FlyBase"/>
</dbReference>
<dbReference type="GO" id="GO:0009798">
    <property type="term" value="P:axis specification"/>
    <property type="evidence" value="ECO:0000315"/>
    <property type="project" value="FlyBase"/>
</dbReference>
<dbReference type="GO" id="GO:0007267">
    <property type="term" value="P:cell-cell signaling"/>
    <property type="evidence" value="ECO:0000270"/>
    <property type="project" value="UniProtKB"/>
</dbReference>
<dbReference type="GO" id="GO:0001745">
    <property type="term" value="P:compound eye morphogenesis"/>
    <property type="evidence" value="ECO:0000316"/>
    <property type="project" value="FlyBase"/>
</dbReference>
<dbReference type="GO" id="GO:0001751">
    <property type="term" value="P:compound eye photoreceptor cell differentiation"/>
    <property type="evidence" value="ECO:0000316"/>
    <property type="project" value="FlyBase"/>
</dbReference>
<dbReference type="GO" id="GO:0032456">
    <property type="term" value="P:endocytic recycling"/>
    <property type="evidence" value="ECO:0000316"/>
    <property type="project" value="FlyBase"/>
</dbReference>
<dbReference type="GO" id="GO:0006897">
    <property type="term" value="P:endocytosis"/>
    <property type="evidence" value="ECO:0000270"/>
    <property type="project" value="UniProtKB"/>
</dbReference>
<dbReference type="GO" id="GO:0010669">
    <property type="term" value="P:epithelial structure maintenance"/>
    <property type="evidence" value="ECO:0000315"/>
    <property type="project" value="FlyBase"/>
</dbReference>
<dbReference type="GO" id="GO:0035329">
    <property type="term" value="P:hippo signaling"/>
    <property type="evidence" value="ECO:0000315"/>
    <property type="project" value="UniProtKB"/>
</dbReference>
<dbReference type="GO" id="GO:0007112">
    <property type="term" value="P:male meiosis cytokinesis"/>
    <property type="evidence" value="ECO:0000315"/>
    <property type="project" value="FlyBase"/>
</dbReference>
<dbReference type="GO" id="GO:0051307">
    <property type="term" value="P:meiotic chromosome separation"/>
    <property type="evidence" value="ECO:0000315"/>
    <property type="project" value="FlyBase"/>
</dbReference>
<dbReference type="GO" id="GO:0008285">
    <property type="term" value="P:negative regulation of cell population proliferation"/>
    <property type="evidence" value="ECO:0000315"/>
    <property type="project" value="FlyBase"/>
</dbReference>
<dbReference type="GO" id="GO:0060253">
    <property type="term" value="P:negative regulation of glial cell proliferation"/>
    <property type="evidence" value="ECO:0000315"/>
    <property type="project" value="FlyBase"/>
</dbReference>
<dbReference type="GO" id="GO:0046621">
    <property type="term" value="P:negative regulation of organ growth"/>
    <property type="evidence" value="ECO:0000315"/>
    <property type="project" value="FlyBase"/>
</dbReference>
<dbReference type="GO" id="GO:0019094">
    <property type="term" value="P:pole plasm mRNA localization"/>
    <property type="evidence" value="ECO:0000315"/>
    <property type="project" value="FlyBase"/>
</dbReference>
<dbReference type="GO" id="GO:0043065">
    <property type="term" value="P:positive regulation of apoptotic process"/>
    <property type="evidence" value="ECO:0000316"/>
    <property type="project" value="FlyBase"/>
</dbReference>
<dbReference type="GO" id="GO:0022409">
    <property type="term" value="P:positive regulation of cell-cell adhesion"/>
    <property type="evidence" value="ECO:0000316"/>
    <property type="project" value="FlyBase"/>
</dbReference>
<dbReference type="GO" id="GO:2000643">
    <property type="term" value="P:positive regulation of early endosome to late endosome transport"/>
    <property type="evidence" value="ECO:0000318"/>
    <property type="project" value="GO_Central"/>
</dbReference>
<dbReference type="GO" id="GO:0035332">
    <property type="term" value="P:positive regulation of hippo signaling"/>
    <property type="evidence" value="ECO:0000314"/>
    <property type="project" value="FlyBase"/>
</dbReference>
<dbReference type="GO" id="GO:1902966">
    <property type="term" value="P:positive regulation of protein localization to early endosome"/>
    <property type="evidence" value="ECO:0000318"/>
    <property type="project" value="GO_Central"/>
</dbReference>
<dbReference type="GO" id="GO:0072659">
    <property type="term" value="P:protein localization to plasma membrane"/>
    <property type="evidence" value="ECO:0000315"/>
    <property type="project" value="FlyBase"/>
</dbReference>
<dbReference type="GO" id="GO:0045463">
    <property type="term" value="P:R8 cell development"/>
    <property type="evidence" value="ECO:0000316"/>
    <property type="project" value="FlyBase"/>
</dbReference>
<dbReference type="GO" id="GO:0045464">
    <property type="term" value="P:R8 cell fate specification"/>
    <property type="evidence" value="ECO:0000315"/>
    <property type="project" value="FlyBase"/>
</dbReference>
<dbReference type="GO" id="GO:0045595">
    <property type="term" value="P:regulation of cell differentiation"/>
    <property type="evidence" value="ECO:0000316"/>
    <property type="project" value="FlyBase"/>
</dbReference>
<dbReference type="GO" id="GO:0001558">
    <property type="term" value="P:regulation of cell growth"/>
    <property type="evidence" value="ECO:0000270"/>
    <property type="project" value="UniProtKB"/>
</dbReference>
<dbReference type="GO" id="GO:0042127">
    <property type="term" value="P:regulation of cell population proliferation"/>
    <property type="evidence" value="ECO:0000315"/>
    <property type="project" value="FlyBase"/>
</dbReference>
<dbReference type="GO" id="GO:0008360">
    <property type="term" value="P:regulation of cell shape"/>
    <property type="evidence" value="ECO:0000318"/>
    <property type="project" value="GO_Central"/>
</dbReference>
<dbReference type="GO" id="GO:0046669">
    <property type="term" value="P:regulation of compound eye retinal cell programmed cell death"/>
    <property type="evidence" value="ECO:0000315"/>
    <property type="project" value="FlyBase"/>
</dbReference>
<dbReference type="GO" id="GO:0014013">
    <property type="term" value="P:regulation of gliogenesis"/>
    <property type="evidence" value="ECO:0000318"/>
    <property type="project" value="GO_Central"/>
</dbReference>
<dbReference type="GO" id="GO:0035330">
    <property type="term" value="P:regulation of hippo signaling"/>
    <property type="evidence" value="ECO:0000318"/>
    <property type="project" value="GO_Central"/>
</dbReference>
<dbReference type="GO" id="GO:1902115">
    <property type="term" value="P:regulation of organelle assembly"/>
    <property type="evidence" value="ECO:0000318"/>
    <property type="project" value="GO_Central"/>
</dbReference>
<dbReference type="GO" id="GO:0009966">
    <property type="term" value="P:regulation of signal transduction"/>
    <property type="evidence" value="ECO:0000316"/>
    <property type="project" value="FlyBase"/>
</dbReference>
<dbReference type="GO" id="GO:0007291">
    <property type="term" value="P:sperm individualization"/>
    <property type="evidence" value="ECO:0000315"/>
    <property type="project" value="FlyBase"/>
</dbReference>
<dbReference type="GO" id="GO:0007283">
    <property type="term" value="P:spermatogenesis"/>
    <property type="evidence" value="ECO:0000315"/>
    <property type="project" value="FlyBase"/>
</dbReference>
<dbReference type="CDD" id="cd14473">
    <property type="entry name" value="FERM_B-lobe"/>
    <property type="match status" value="1"/>
</dbReference>
<dbReference type="CDD" id="cd13194">
    <property type="entry name" value="FERM_C_ERM"/>
    <property type="match status" value="1"/>
</dbReference>
<dbReference type="CDD" id="cd17097">
    <property type="entry name" value="FERM_F1_ERM_like"/>
    <property type="match status" value="1"/>
</dbReference>
<dbReference type="FunFam" id="1.20.80.10:FF:000002">
    <property type="entry name" value="radixin isoform X1"/>
    <property type="match status" value="1"/>
</dbReference>
<dbReference type="FunFam" id="1.20.5.450:FF:000001">
    <property type="entry name" value="radixin isoform X2"/>
    <property type="match status" value="1"/>
</dbReference>
<dbReference type="Gene3D" id="1.20.5.450">
    <property type="match status" value="1"/>
</dbReference>
<dbReference type="Gene3D" id="1.20.80.10">
    <property type="match status" value="1"/>
</dbReference>
<dbReference type="Gene3D" id="6.10.360.10">
    <property type="match status" value="1"/>
</dbReference>
<dbReference type="Gene3D" id="3.10.20.90">
    <property type="entry name" value="Phosphatidylinositol 3-kinase Catalytic Subunit, Chain A, domain 1"/>
    <property type="match status" value="1"/>
</dbReference>
<dbReference type="Gene3D" id="2.30.29.30">
    <property type="entry name" value="Pleckstrin-homology domain (PH domain)/Phosphotyrosine-binding domain (PTB)"/>
    <property type="match status" value="1"/>
</dbReference>
<dbReference type="InterPro" id="IPR019749">
    <property type="entry name" value="Band_41_domain"/>
</dbReference>
<dbReference type="InterPro" id="IPR011174">
    <property type="entry name" value="ERM"/>
</dbReference>
<dbReference type="InterPro" id="IPR011259">
    <property type="entry name" value="ERM_C_dom"/>
</dbReference>
<dbReference type="InterPro" id="IPR041789">
    <property type="entry name" value="ERM_FERM_C"/>
</dbReference>
<dbReference type="InterPro" id="IPR046810">
    <property type="entry name" value="ERM_helical"/>
</dbReference>
<dbReference type="InterPro" id="IPR000798">
    <property type="entry name" value="Ez/rad/moesin-like"/>
</dbReference>
<dbReference type="InterPro" id="IPR014352">
    <property type="entry name" value="FERM/acyl-CoA-bd_prot_sf"/>
</dbReference>
<dbReference type="InterPro" id="IPR035963">
    <property type="entry name" value="FERM_2"/>
</dbReference>
<dbReference type="InterPro" id="IPR019748">
    <property type="entry name" value="FERM_central"/>
</dbReference>
<dbReference type="InterPro" id="IPR000299">
    <property type="entry name" value="FERM_domain"/>
</dbReference>
<dbReference type="InterPro" id="IPR018979">
    <property type="entry name" value="FERM_N"/>
</dbReference>
<dbReference type="InterPro" id="IPR018980">
    <property type="entry name" value="FERM_PH-like_C"/>
</dbReference>
<dbReference type="InterPro" id="IPR008954">
    <property type="entry name" value="Moesin_tail_sf"/>
</dbReference>
<dbReference type="InterPro" id="IPR011993">
    <property type="entry name" value="PH-like_dom_sf"/>
</dbReference>
<dbReference type="InterPro" id="IPR029071">
    <property type="entry name" value="Ubiquitin-like_domsf"/>
</dbReference>
<dbReference type="PANTHER" id="PTHR23281">
    <property type="entry name" value="MERLIN/MOESIN/EZRIN/RADIXIN"/>
    <property type="match status" value="1"/>
</dbReference>
<dbReference type="Pfam" id="PF00769">
    <property type="entry name" value="ERM_C"/>
    <property type="match status" value="1"/>
</dbReference>
<dbReference type="Pfam" id="PF20492">
    <property type="entry name" value="ERM_helical"/>
    <property type="match status" value="1"/>
</dbReference>
<dbReference type="Pfam" id="PF09380">
    <property type="entry name" value="FERM_C"/>
    <property type="match status" value="1"/>
</dbReference>
<dbReference type="Pfam" id="PF00373">
    <property type="entry name" value="FERM_M"/>
    <property type="match status" value="1"/>
</dbReference>
<dbReference type="Pfam" id="PF09379">
    <property type="entry name" value="FERM_N"/>
    <property type="match status" value="1"/>
</dbReference>
<dbReference type="PIRSF" id="PIRSF002305">
    <property type="entry name" value="ERM"/>
    <property type="match status" value="1"/>
</dbReference>
<dbReference type="PRINTS" id="PR00935">
    <property type="entry name" value="BAND41"/>
</dbReference>
<dbReference type="PRINTS" id="PR00661">
    <property type="entry name" value="ERMFAMILY"/>
</dbReference>
<dbReference type="SMART" id="SM00295">
    <property type="entry name" value="B41"/>
    <property type="match status" value="1"/>
</dbReference>
<dbReference type="SMART" id="SM01196">
    <property type="entry name" value="FERM_C"/>
    <property type="match status" value="1"/>
</dbReference>
<dbReference type="SUPFAM" id="SSF48678">
    <property type="entry name" value="Moesin tail domain"/>
    <property type="match status" value="1"/>
</dbReference>
<dbReference type="SUPFAM" id="SSF50729">
    <property type="entry name" value="PH domain-like"/>
    <property type="match status" value="1"/>
</dbReference>
<dbReference type="SUPFAM" id="SSF47031">
    <property type="entry name" value="Second domain of FERM"/>
    <property type="match status" value="1"/>
</dbReference>
<dbReference type="SUPFAM" id="SSF54236">
    <property type="entry name" value="Ubiquitin-like"/>
    <property type="match status" value="1"/>
</dbReference>
<dbReference type="PROSITE" id="PS50057">
    <property type="entry name" value="FERM_3"/>
    <property type="match status" value="1"/>
</dbReference>